<comment type="similarity">
    <text evidence="1">Belongs to the bacterial ribosomal protein bL33 family.</text>
</comment>
<protein>
    <recommendedName>
        <fullName evidence="1">Large ribosomal subunit protein bL33</fullName>
    </recommendedName>
    <alternativeName>
        <fullName evidence="2">50S ribosomal protein L33</fullName>
    </alternativeName>
</protein>
<reference key="1">
    <citation type="journal article" date="2008" name="J. Biotechnol.">
        <title>The genome of Xanthomonas campestris pv. campestris B100 and its use for the reconstruction of metabolic pathways involved in xanthan biosynthesis.</title>
        <authorList>
            <person name="Vorhoelter F.-J."/>
            <person name="Schneiker S."/>
            <person name="Goesmann A."/>
            <person name="Krause L."/>
            <person name="Bekel T."/>
            <person name="Kaiser O."/>
            <person name="Linke B."/>
            <person name="Patschkowski T."/>
            <person name="Rueckert C."/>
            <person name="Schmid J."/>
            <person name="Sidhu V.K."/>
            <person name="Sieber V."/>
            <person name="Tauch A."/>
            <person name="Watt S.A."/>
            <person name="Weisshaar B."/>
            <person name="Becker A."/>
            <person name="Niehaus K."/>
            <person name="Puehler A."/>
        </authorList>
    </citation>
    <scope>NUCLEOTIDE SEQUENCE [LARGE SCALE GENOMIC DNA]</scope>
    <source>
        <strain>B100</strain>
    </source>
</reference>
<organism>
    <name type="scientific">Xanthomonas campestris pv. campestris (strain B100)</name>
    <dbReference type="NCBI Taxonomy" id="509169"/>
    <lineage>
        <taxon>Bacteria</taxon>
        <taxon>Pseudomonadati</taxon>
        <taxon>Pseudomonadota</taxon>
        <taxon>Gammaproteobacteria</taxon>
        <taxon>Lysobacterales</taxon>
        <taxon>Lysobacteraceae</taxon>
        <taxon>Xanthomonas</taxon>
    </lineage>
</organism>
<gene>
    <name evidence="1" type="primary">rpmG</name>
    <name type="ordered locus">xcc-b100_4229</name>
</gene>
<proteinExistence type="inferred from homology"/>
<sequence length="55" mass="6406">MAKGKRDKIRMISSAATGHFYTTDKNKKNTPGKMEMMKYDPVVRKHVMYKEGKIK</sequence>
<accession>B0RYR2</accession>
<dbReference type="EMBL" id="AM920689">
    <property type="protein sequence ID" value="CAP53598.1"/>
    <property type="molecule type" value="Genomic_DNA"/>
</dbReference>
<dbReference type="SMR" id="B0RYR2"/>
<dbReference type="KEGG" id="xca:xcc-b100_4229"/>
<dbReference type="HOGENOM" id="CLU_190949_1_1_6"/>
<dbReference type="Proteomes" id="UP000001188">
    <property type="component" value="Chromosome"/>
</dbReference>
<dbReference type="GO" id="GO:0022625">
    <property type="term" value="C:cytosolic large ribosomal subunit"/>
    <property type="evidence" value="ECO:0007669"/>
    <property type="project" value="TreeGrafter"/>
</dbReference>
<dbReference type="GO" id="GO:0003735">
    <property type="term" value="F:structural constituent of ribosome"/>
    <property type="evidence" value="ECO:0007669"/>
    <property type="project" value="InterPro"/>
</dbReference>
<dbReference type="GO" id="GO:0006412">
    <property type="term" value="P:translation"/>
    <property type="evidence" value="ECO:0007669"/>
    <property type="project" value="UniProtKB-UniRule"/>
</dbReference>
<dbReference type="FunFam" id="2.20.28.120:FF:000001">
    <property type="entry name" value="50S ribosomal protein L33"/>
    <property type="match status" value="1"/>
</dbReference>
<dbReference type="Gene3D" id="2.20.28.120">
    <property type="entry name" value="Ribosomal protein L33"/>
    <property type="match status" value="1"/>
</dbReference>
<dbReference type="HAMAP" id="MF_00294">
    <property type="entry name" value="Ribosomal_bL33"/>
    <property type="match status" value="1"/>
</dbReference>
<dbReference type="InterPro" id="IPR001705">
    <property type="entry name" value="Ribosomal_bL33"/>
</dbReference>
<dbReference type="InterPro" id="IPR018264">
    <property type="entry name" value="Ribosomal_bL33_CS"/>
</dbReference>
<dbReference type="InterPro" id="IPR038584">
    <property type="entry name" value="Ribosomal_bL33_sf"/>
</dbReference>
<dbReference type="InterPro" id="IPR011332">
    <property type="entry name" value="Ribosomal_zn-bd"/>
</dbReference>
<dbReference type="NCBIfam" id="NF001860">
    <property type="entry name" value="PRK00595.1"/>
    <property type="match status" value="1"/>
</dbReference>
<dbReference type="NCBIfam" id="TIGR01023">
    <property type="entry name" value="rpmG_bact"/>
    <property type="match status" value="1"/>
</dbReference>
<dbReference type="PANTHER" id="PTHR15238">
    <property type="entry name" value="54S RIBOSOMAL PROTEIN L39, MITOCHONDRIAL"/>
    <property type="match status" value="1"/>
</dbReference>
<dbReference type="PANTHER" id="PTHR15238:SF1">
    <property type="entry name" value="LARGE RIBOSOMAL SUBUNIT PROTEIN BL33M"/>
    <property type="match status" value="1"/>
</dbReference>
<dbReference type="Pfam" id="PF00471">
    <property type="entry name" value="Ribosomal_L33"/>
    <property type="match status" value="1"/>
</dbReference>
<dbReference type="SUPFAM" id="SSF57829">
    <property type="entry name" value="Zn-binding ribosomal proteins"/>
    <property type="match status" value="1"/>
</dbReference>
<dbReference type="PROSITE" id="PS00582">
    <property type="entry name" value="RIBOSOMAL_L33"/>
    <property type="match status" value="1"/>
</dbReference>
<name>RL33_XANCB</name>
<keyword id="KW-0687">Ribonucleoprotein</keyword>
<keyword id="KW-0689">Ribosomal protein</keyword>
<evidence type="ECO:0000255" key="1">
    <source>
        <dbReference type="HAMAP-Rule" id="MF_00294"/>
    </source>
</evidence>
<evidence type="ECO:0000305" key="2"/>
<feature type="chain" id="PRO_1000115165" description="Large ribosomal subunit protein bL33">
    <location>
        <begin position="1"/>
        <end position="55"/>
    </location>
</feature>